<dbReference type="EC" id="2.3.1.51" evidence="5"/>
<dbReference type="EMBL" id="U40829">
    <property type="protein sequence ID" value="AAB68279.1"/>
    <property type="molecule type" value="Genomic_DNA"/>
</dbReference>
<dbReference type="EMBL" id="AY693235">
    <property type="protein sequence ID" value="AAT93254.1"/>
    <property type="molecule type" value="Genomic_DNA"/>
</dbReference>
<dbReference type="EMBL" id="BK006949">
    <property type="protein sequence ID" value="DAA11553.1"/>
    <property type="molecule type" value="Genomic_DNA"/>
</dbReference>
<dbReference type="PIR" id="S69028">
    <property type="entry name" value="S69028"/>
</dbReference>
<dbReference type="RefSeq" id="NP_015465.1">
    <property type="nucleotide sequence ID" value="NM_001184236.1"/>
</dbReference>
<dbReference type="SMR" id="Q06508"/>
<dbReference type="BioGRID" id="36308">
    <property type="interactions" value="34"/>
</dbReference>
<dbReference type="FunCoup" id="Q06508">
    <property type="interactions" value="103"/>
</dbReference>
<dbReference type="IntAct" id="Q06508">
    <property type="interactions" value="5"/>
</dbReference>
<dbReference type="MINT" id="Q06508"/>
<dbReference type="STRING" id="4932.YPR139C"/>
<dbReference type="SwissLipids" id="SLP:000000079"/>
<dbReference type="PaxDb" id="4932-YPR139C"/>
<dbReference type="PeptideAtlas" id="Q06508"/>
<dbReference type="EnsemblFungi" id="YPR139C_mRNA">
    <property type="protein sequence ID" value="YPR139C"/>
    <property type="gene ID" value="YPR139C"/>
</dbReference>
<dbReference type="GeneID" id="856261"/>
<dbReference type="KEGG" id="sce:YPR139C"/>
<dbReference type="AGR" id="SGD:S000006343"/>
<dbReference type="SGD" id="S000006343">
    <property type="gene designation" value="LOA1"/>
</dbReference>
<dbReference type="VEuPathDB" id="FungiDB:YPR139C"/>
<dbReference type="eggNOG" id="ENOG502RYF8">
    <property type="taxonomic scope" value="Eukaryota"/>
</dbReference>
<dbReference type="HOGENOM" id="CLU_048121_1_0_1"/>
<dbReference type="InParanoid" id="Q06508"/>
<dbReference type="OMA" id="NWRDKGT"/>
<dbReference type="OrthoDB" id="272512at2759"/>
<dbReference type="BioCyc" id="MetaCyc:G3O-34274-MONOMER"/>
<dbReference type="BioCyc" id="YEAST:G3O-34274-MONOMER"/>
<dbReference type="BRENDA" id="2.3.1.51">
    <property type="organism ID" value="984"/>
</dbReference>
<dbReference type="BioGRID-ORCS" id="856261">
    <property type="hits" value="8 hits in 10 CRISPR screens"/>
</dbReference>
<dbReference type="CD-CODE" id="E03F929F">
    <property type="entry name" value="Stress granule"/>
</dbReference>
<dbReference type="PRO" id="PR:Q06508"/>
<dbReference type="Proteomes" id="UP000002311">
    <property type="component" value="Chromosome XVI"/>
</dbReference>
<dbReference type="RNAct" id="Q06508">
    <property type="molecule type" value="protein"/>
</dbReference>
<dbReference type="GO" id="GO:0005737">
    <property type="term" value="C:cytoplasm"/>
    <property type="evidence" value="ECO:0007005"/>
    <property type="project" value="SGD"/>
</dbReference>
<dbReference type="GO" id="GO:0005783">
    <property type="term" value="C:endoplasmic reticulum"/>
    <property type="evidence" value="ECO:0000314"/>
    <property type="project" value="SGD"/>
</dbReference>
<dbReference type="GO" id="GO:0005789">
    <property type="term" value="C:endoplasmic reticulum membrane"/>
    <property type="evidence" value="ECO:0007669"/>
    <property type="project" value="UniProtKB-SubCell"/>
</dbReference>
<dbReference type="GO" id="GO:0005811">
    <property type="term" value="C:lipid droplet"/>
    <property type="evidence" value="ECO:0000314"/>
    <property type="project" value="SGD"/>
</dbReference>
<dbReference type="GO" id="GO:0003841">
    <property type="term" value="F:1-acylglycerol-3-phosphate O-acyltransferase activity"/>
    <property type="evidence" value="ECO:0007669"/>
    <property type="project" value="UniProtKB-EC"/>
</dbReference>
<dbReference type="GO" id="GO:0042171">
    <property type="term" value="F:lysophosphatidic acid acyltransferase activity"/>
    <property type="evidence" value="ECO:0000314"/>
    <property type="project" value="SGD"/>
</dbReference>
<dbReference type="GO" id="GO:0035356">
    <property type="term" value="P:intracellular triglyceride homeostasis"/>
    <property type="evidence" value="ECO:0000315"/>
    <property type="project" value="SGD"/>
</dbReference>
<dbReference type="GO" id="GO:0034389">
    <property type="term" value="P:lipid droplet organization"/>
    <property type="evidence" value="ECO:0000315"/>
    <property type="project" value="SGD"/>
</dbReference>
<dbReference type="GO" id="GO:0006629">
    <property type="term" value="P:lipid metabolic process"/>
    <property type="evidence" value="ECO:0007669"/>
    <property type="project" value="UniProtKB-KW"/>
</dbReference>
<dbReference type="GO" id="GO:0006623">
    <property type="term" value="P:protein targeting to vacuole"/>
    <property type="evidence" value="ECO:0007001"/>
    <property type="project" value="SGD"/>
</dbReference>
<organism>
    <name type="scientific">Saccharomyces cerevisiae (strain ATCC 204508 / S288c)</name>
    <name type="common">Baker's yeast</name>
    <dbReference type="NCBI Taxonomy" id="559292"/>
    <lineage>
        <taxon>Eukaryota</taxon>
        <taxon>Fungi</taxon>
        <taxon>Dikarya</taxon>
        <taxon>Ascomycota</taxon>
        <taxon>Saccharomycotina</taxon>
        <taxon>Saccharomycetes</taxon>
        <taxon>Saccharomycetales</taxon>
        <taxon>Saccharomycetaceae</taxon>
        <taxon>Saccharomyces</taxon>
    </lineage>
</organism>
<comment type="function">
    <text evidence="2 5">Acyl-CoA-dependent lysophosphatidic acid acyltransferase with preference for oleoyl-CoA. Involved in triacylglyceride homeostasis and lipid droplet formation. Involved in vacuolar protein sorting.</text>
</comment>
<comment type="catalytic activity">
    <reaction evidence="5">
        <text>a 1-acyl-sn-glycero-3-phosphate + an acyl-CoA = a 1,2-diacyl-sn-glycero-3-phosphate + CoA</text>
        <dbReference type="Rhea" id="RHEA:19709"/>
        <dbReference type="ChEBI" id="CHEBI:57287"/>
        <dbReference type="ChEBI" id="CHEBI:57970"/>
        <dbReference type="ChEBI" id="CHEBI:58342"/>
        <dbReference type="ChEBI" id="CHEBI:58608"/>
        <dbReference type="EC" id="2.3.1.51"/>
    </reaction>
    <physiologicalReaction direction="left-to-right" evidence="9">
        <dbReference type="Rhea" id="RHEA:19710"/>
    </physiologicalReaction>
</comment>
<comment type="catalytic activity">
    <reaction evidence="5">
        <text>1-hexadecanoyl-sn-glycero-3-phosphate + (9Z)-octadecenoyl-CoA = 1-hexadecanoyl-2-(9Z-octadecenoyl)-sn-glycero-3-phosphate + CoA</text>
        <dbReference type="Rhea" id="RHEA:33187"/>
        <dbReference type="ChEBI" id="CHEBI:57287"/>
        <dbReference type="ChEBI" id="CHEBI:57387"/>
        <dbReference type="ChEBI" id="CHEBI:57518"/>
        <dbReference type="ChEBI" id="CHEBI:64839"/>
    </reaction>
    <physiologicalReaction direction="left-to-right" evidence="9">
        <dbReference type="Rhea" id="RHEA:33188"/>
    </physiologicalReaction>
</comment>
<comment type="subcellular location">
    <subcellularLocation>
        <location evidence="4 5">Lipid droplet</location>
    </subcellularLocation>
    <subcellularLocation>
        <location evidence="9">Endoplasmic reticulum membrane</location>
        <topology evidence="1">Single-pass membrane protein</topology>
    </subcellularLocation>
    <text evidence="4">Lipid droplets consist of a surface phospholipid monolayer and a hydrophobic interior. The latter makes embedding of proteins containing transmembrane segments difficult, and these may instead adopt a hairpin or monotonic conformation when associated with lipid droplet membranes. Always localizes to lipid droplets, irrespective of whether cells are grown on glucose or oleate.</text>
</comment>
<comment type="miscellaneous">
    <text evidence="3">Present with 6630 molecules/cell in log phase SD medium.</text>
</comment>
<comment type="similarity">
    <text evidence="8">Belongs to the 1-acyl-sn-glycerol-3-phosphate acyltransferase family.</text>
</comment>
<gene>
    <name evidence="7" type="primary">LOA1</name>
    <name evidence="6" type="synonym">VPS66</name>
    <name type="ordered locus">YPR139C</name>
</gene>
<proteinExistence type="evidence at protein level"/>
<sequence length="300" mass="33816">MEKYTNWRDNGTGIAPFLPNTIRKPSKVMTACLLGILGVKTIIMLPLIMLYLLTGQNNLLGLILKFTFSWKEEITVQGIKKRDVRKSKHYPQKGKLYICNCTSPLDAFSVVLLAQGPVTLLVPSNDIVYKVSIREFINFILAGGLDIKLYGHEVAELSQLGNTVNFMFAEGTSCNGKSVLPFSITGKKLKEFIDPSITTMNPAMAKTKKFELQTIQIKTNKTAITTLPISNMEYLSRFLNKGINVKCKINEPQVLSDNLEELRVALNGGDKYKLVSRKLDVESKRNFVKEYISDQRKKRK</sequence>
<accession>Q06508</accession>
<accession>D6W4D7</accession>
<reference key="1">
    <citation type="journal article" date="1997" name="Nature">
        <title>The nucleotide sequence of Saccharomyces cerevisiae chromosome XVI.</title>
        <authorList>
            <person name="Bussey H."/>
            <person name="Storms R.K."/>
            <person name="Ahmed A."/>
            <person name="Albermann K."/>
            <person name="Allen E."/>
            <person name="Ansorge W."/>
            <person name="Araujo R."/>
            <person name="Aparicio A."/>
            <person name="Barrell B.G."/>
            <person name="Badcock K."/>
            <person name="Benes V."/>
            <person name="Botstein D."/>
            <person name="Bowman S."/>
            <person name="Brueckner M."/>
            <person name="Carpenter J."/>
            <person name="Cherry J.M."/>
            <person name="Chung E."/>
            <person name="Churcher C.M."/>
            <person name="Coster F."/>
            <person name="Davis K."/>
            <person name="Davis R.W."/>
            <person name="Dietrich F.S."/>
            <person name="Delius H."/>
            <person name="DiPaolo T."/>
            <person name="Dubois E."/>
            <person name="Duesterhoeft A."/>
            <person name="Duncan M."/>
            <person name="Floeth M."/>
            <person name="Fortin N."/>
            <person name="Friesen J.D."/>
            <person name="Fritz C."/>
            <person name="Goffeau A."/>
            <person name="Hall J."/>
            <person name="Hebling U."/>
            <person name="Heumann K."/>
            <person name="Hilbert H."/>
            <person name="Hillier L.W."/>
            <person name="Hunicke-Smith S."/>
            <person name="Hyman R.W."/>
            <person name="Johnston M."/>
            <person name="Kalman S."/>
            <person name="Kleine K."/>
            <person name="Komp C."/>
            <person name="Kurdi O."/>
            <person name="Lashkari D."/>
            <person name="Lew H."/>
            <person name="Lin A."/>
            <person name="Lin D."/>
            <person name="Louis E.J."/>
            <person name="Marathe R."/>
            <person name="Messenguy F."/>
            <person name="Mewes H.-W."/>
            <person name="Mirtipati S."/>
            <person name="Moestl D."/>
            <person name="Mueller-Auer S."/>
            <person name="Namath A."/>
            <person name="Nentwich U."/>
            <person name="Oefner P."/>
            <person name="Pearson D."/>
            <person name="Petel F.X."/>
            <person name="Pohl T.M."/>
            <person name="Purnelle B."/>
            <person name="Rajandream M.A."/>
            <person name="Rechmann S."/>
            <person name="Rieger M."/>
            <person name="Riles L."/>
            <person name="Roberts D."/>
            <person name="Schaefer M."/>
            <person name="Scharfe M."/>
            <person name="Scherens B."/>
            <person name="Schramm S."/>
            <person name="Schroeder M."/>
            <person name="Sdicu A.-M."/>
            <person name="Tettelin H."/>
            <person name="Urrestarazu L.A."/>
            <person name="Ushinsky S."/>
            <person name="Vierendeels F."/>
            <person name="Vissers S."/>
            <person name="Voss H."/>
            <person name="Walsh S.V."/>
            <person name="Wambutt R."/>
            <person name="Wang Y."/>
            <person name="Wedler E."/>
            <person name="Wedler H."/>
            <person name="Winnett E."/>
            <person name="Zhong W.-W."/>
            <person name="Zollner A."/>
            <person name="Vo D.H."/>
            <person name="Hani J."/>
        </authorList>
    </citation>
    <scope>NUCLEOTIDE SEQUENCE [LARGE SCALE GENOMIC DNA]</scope>
    <source>
        <strain>ATCC 204508 / S288c</strain>
    </source>
</reference>
<reference key="2">
    <citation type="journal article" date="2014" name="G3 (Bethesda)">
        <title>The reference genome sequence of Saccharomyces cerevisiae: Then and now.</title>
        <authorList>
            <person name="Engel S.R."/>
            <person name="Dietrich F.S."/>
            <person name="Fisk D.G."/>
            <person name="Binkley G."/>
            <person name="Balakrishnan R."/>
            <person name="Costanzo M.C."/>
            <person name="Dwight S.S."/>
            <person name="Hitz B.C."/>
            <person name="Karra K."/>
            <person name="Nash R.S."/>
            <person name="Weng S."/>
            <person name="Wong E.D."/>
            <person name="Lloyd P."/>
            <person name="Skrzypek M.S."/>
            <person name="Miyasato S.R."/>
            <person name="Simison M."/>
            <person name="Cherry J.M."/>
        </authorList>
    </citation>
    <scope>GENOME REANNOTATION</scope>
    <source>
        <strain>ATCC 204508 / S288c</strain>
    </source>
</reference>
<reference key="3">
    <citation type="journal article" date="2007" name="Genome Res.">
        <title>Approaching a complete repository of sequence-verified protein-encoding clones for Saccharomyces cerevisiae.</title>
        <authorList>
            <person name="Hu Y."/>
            <person name="Rolfs A."/>
            <person name="Bhullar B."/>
            <person name="Murthy T.V.S."/>
            <person name="Zhu C."/>
            <person name="Berger M.F."/>
            <person name="Camargo A.A."/>
            <person name="Kelley F."/>
            <person name="McCarron S."/>
            <person name="Jepson D."/>
            <person name="Richardson A."/>
            <person name="Raphael J."/>
            <person name="Moreira D."/>
            <person name="Taycher E."/>
            <person name="Zuo D."/>
            <person name="Mohr S."/>
            <person name="Kane M.F."/>
            <person name="Williamson J."/>
            <person name="Simpson A.J.G."/>
            <person name="Bulyk M.L."/>
            <person name="Harlow E."/>
            <person name="Marsischky G."/>
            <person name="Kolodner R.D."/>
            <person name="LaBaer J."/>
        </authorList>
    </citation>
    <scope>NUCLEOTIDE SEQUENCE [GENOMIC DNA]</scope>
    <source>
        <strain>ATCC 204508 / S288c</strain>
    </source>
</reference>
<reference key="4">
    <citation type="journal article" date="2002" name="Mol. Biol. Cell">
        <title>Genomic screen for vacuolar protein sorting genes in Saccharomyces cerevisiae.</title>
        <authorList>
            <person name="Bonangelino C.J."/>
            <person name="Chavez E.M."/>
            <person name="Bonifacino J.S."/>
        </authorList>
    </citation>
    <scope>FUNCTION</scope>
</reference>
<reference key="5">
    <citation type="journal article" date="2003" name="Nature">
        <title>Global analysis of protein expression in yeast.</title>
        <authorList>
            <person name="Ghaemmaghami S."/>
            <person name="Huh W.-K."/>
            <person name="Bower K."/>
            <person name="Howson R.W."/>
            <person name="Belle A."/>
            <person name="Dephoure N."/>
            <person name="O'Shea E.K."/>
            <person name="Weissman J.S."/>
        </authorList>
    </citation>
    <scope>LEVEL OF PROTEIN EXPRESSION [LARGE SCALE ANALYSIS]</scope>
</reference>
<reference key="6">
    <citation type="journal article" date="2011" name="Biochim. Biophys. Acta">
        <title>Lipid particles/droplets of the yeast Saccharomyces cerevisiae revisited: lipidome meets proteome.</title>
        <authorList>
            <person name="Grillitsch K."/>
            <person name="Connerth M."/>
            <person name="Kofeler H."/>
            <person name="Arrey T.N."/>
            <person name="Rietschel B."/>
            <person name="Wagner B."/>
            <person name="Karas M."/>
            <person name="Daum G."/>
        </authorList>
    </citation>
    <scope>SUBCELLULAR LOCATION</scope>
    <scope>IDENTIFICATION BY MASS SPECTROMETRY</scope>
</reference>
<reference key="7">
    <citation type="journal article" date="2012" name="Mol. Biol. Cell">
        <title>YPR139c/LOA1 encodes a novel lysophosphatidic acid acyltransferase associated with lipid droplets and involved in TAG homeostasis.</title>
        <authorList>
            <person name="Ayciriex S."/>
            <person name="Le Guedard M."/>
            <person name="Camougrand N."/>
            <person name="Velours G."/>
            <person name="Schoene M."/>
            <person name="Leone S."/>
            <person name="Wattelet-Boyer V."/>
            <person name="Dupuy J.W."/>
            <person name="Shevchenko A."/>
            <person name="Schmitter J.M."/>
            <person name="Lessire R."/>
            <person name="Bessoule J.J."/>
            <person name="Testet E."/>
        </authorList>
    </citation>
    <scope>FUNCTION</scope>
    <scope>CATALYTIC ACTIVITY</scope>
    <scope>SUBCELLULAR LOCATION</scope>
</reference>
<feature type="chain" id="PRO_0000065908" description="Lysophosphatidic acid:oleoyl-CoA acyltransferase 1">
    <location>
        <begin position="1"/>
        <end position="300"/>
    </location>
</feature>
<feature type="transmembrane region" description="Helical" evidence="1">
    <location>
        <begin position="33"/>
        <end position="53"/>
    </location>
</feature>
<feature type="short sequence motif" description="HXXXXD motif">
    <location>
        <begin position="101"/>
        <end position="106"/>
    </location>
</feature>
<name>LOA1_YEAST</name>
<keyword id="KW-0256">Endoplasmic reticulum</keyword>
<keyword id="KW-0551">Lipid droplet</keyword>
<keyword id="KW-0443">Lipid metabolism</keyword>
<keyword id="KW-0472">Membrane</keyword>
<keyword id="KW-1208">Phospholipid metabolism</keyword>
<keyword id="KW-1185">Reference proteome</keyword>
<keyword id="KW-0808">Transferase</keyword>
<keyword id="KW-0812">Transmembrane</keyword>
<keyword id="KW-1133">Transmembrane helix</keyword>
<evidence type="ECO:0000255" key="1"/>
<evidence type="ECO:0000269" key="2">
    <source>
    </source>
</evidence>
<evidence type="ECO:0000269" key="3">
    <source>
    </source>
</evidence>
<evidence type="ECO:0000269" key="4">
    <source>
    </source>
</evidence>
<evidence type="ECO:0000269" key="5">
    <source>
    </source>
</evidence>
<evidence type="ECO:0000303" key="6">
    <source>
    </source>
</evidence>
<evidence type="ECO:0000303" key="7">
    <source>
    </source>
</evidence>
<evidence type="ECO:0000305" key="8"/>
<evidence type="ECO:0000305" key="9">
    <source>
    </source>
</evidence>
<protein>
    <recommendedName>
        <fullName evidence="8">Lysophosphatidic acid:oleoyl-CoA acyltransferase 1</fullName>
        <shortName>LPAAT</shortName>
        <shortName>Lysophosphatidic acid acyltransferase</shortName>
        <ecNumber evidence="5">2.3.1.51</ecNumber>
    </recommendedName>
    <alternativeName>
        <fullName>Vacuolar protein sorting-associated protein 66</fullName>
    </alternativeName>
</protein>